<comment type="function">
    <text evidence="1">Core subunit of the mitochondrial membrane respiratory chain NADH dehydrogenase (Complex I) that is believed to belong to the minimal assembly required for catalysis. Complex I functions in the transfer of electrons from NADH to the respiratory chain. The immediate electron acceptor for the enzyme is believed to be ubiquinone (By similarity).</text>
</comment>
<comment type="catalytic activity">
    <reaction>
        <text>a ubiquinone + NADH + 5 H(+)(in) = a ubiquinol + NAD(+) + 4 H(+)(out)</text>
        <dbReference type="Rhea" id="RHEA:29091"/>
        <dbReference type="Rhea" id="RHEA-COMP:9565"/>
        <dbReference type="Rhea" id="RHEA-COMP:9566"/>
        <dbReference type="ChEBI" id="CHEBI:15378"/>
        <dbReference type="ChEBI" id="CHEBI:16389"/>
        <dbReference type="ChEBI" id="CHEBI:17976"/>
        <dbReference type="ChEBI" id="CHEBI:57540"/>
        <dbReference type="ChEBI" id="CHEBI:57945"/>
        <dbReference type="EC" id="7.1.1.2"/>
    </reaction>
</comment>
<comment type="subcellular location">
    <subcellularLocation>
        <location evidence="1">Mitochondrion inner membrane</location>
        <topology evidence="1">Multi-pass membrane protein</topology>
    </subcellularLocation>
</comment>
<comment type="similarity">
    <text evidence="3">Belongs to the complex I subunit 1 family.</text>
</comment>
<reference key="1">
    <citation type="journal article" date="1997" name="Mol. Biol. Evol.">
        <title>The mtDNA sequence of the ostrich and the divergence between paleognathous and neognathous birds.</title>
        <authorList>
            <person name="Harlid A."/>
            <person name="Janke A."/>
            <person name="Arnason U."/>
        </authorList>
    </citation>
    <scope>NUCLEOTIDE SEQUENCE [GENOMIC DNA]</scope>
</reference>
<reference key="2">
    <citation type="submission" date="1998-06" db="EMBL/GenBank/DDBJ databases">
        <title>Primers for a PCR-based approach to complete mitochondrial genome sequencing.</title>
        <authorList>
            <person name="Sorenson M.D."/>
            <person name="Dimcheff D.E."/>
            <person name="Ast J.C."/>
            <person name="Yuri T."/>
            <person name="Mindell D.P."/>
        </authorList>
    </citation>
    <scope>NUCLEOTIDE SEQUENCE [GENOMIC DNA]</scope>
</reference>
<reference key="3">
    <citation type="journal article" date="2001" name="Proc. R. Soc. B">
        <title>Complete mitochondrial DNA genome sequences of extinct birds: ratite phylogenetics and the vicariance biogeography hypothesis.</title>
        <authorList>
            <person name="Haddrath O."/>
            <person name="Baker A.J."/>
        </authorList>
    </citation>
    <scope>NUCLEOTIDE SEQUENCE [GENOMIC DNA]</scope>
</reference>
<protein>
    <recommendedName>
        <fullName>NADH-ubiquinone oxidoreductase chain 1</fullName>
        <ecNumber>7.1.1.2</ecNumber>
    </recommendedName>
    <alternativeName>
        <fullName>NADH dehydrogenase subunit 1</fullName>
    </alternativeName>
</protein>
<sequence length="324" mass="35986">MQFTIFTHLTMALSYAVPILIAVAFLTLVERKVLSYMQARKGPNIVGPFGLLQPVADGVKLFIKEPVRPTTSSPILFIATPILALLLAITIWIPLPLPFSLTDLNLGLLFLLSMSSLAVYSILWSGWASNSKYALIGALRAVAQTISYEVTLAIILLSVIMLSGNYTLNTLATTQEPLYLIFSTWPLAMMWYISTLAETNRAPFDLTEGESELVSGFNVEYAAGPFALFFLAEYANIMLMNTLTAILFLNPSSLNLPSELFPLILATKTLLLSSGFLWVRASYPRFRYDQLMHLLWKNFLPLTLALCLWHTSLPISYAGIPPHL</sequence>
<evidence type="ECO:0000250" key="1"/>
<evidence type="ECO:0000255" key="2"/>
<evidence type="ECO:0000305" key="3"/>
<accession>O21397</accession>
<accession>O79099</accession>
<proteinExistence type="inferred from homology"/>
<keyword id="KW-0249">Electron transport</keyword>
<keyword id="KW-0472">Membrane</keyword>
<keyword id="KW-0496">Mitochondrion</keyword>
<keyword id="KW-0999">Mitochondrion inner membrane</keyword>
<keyword id="KW-0520">NAD</keyword>
<keyword id="KW-0679">Respiratory chain</keyword>
<keyword id="KW-1278">Translocase</keyword>
<keyword id="KW-0812">Transmembrane</keyword>
<keyword id="KW-1133">Transmembrane helix</keyword>
<keyword id="KW-0813">Transport</keyword>
<keyword id="KW-0830">Ubiquinone</keyword>
<organism>
    <name type="scientific">Struthio camelus</name>
    <name type="common">Common ostrich</name>
    <dbReference type="NCBI Taxonomy" id="8801"/>
    <lineage>
        <taxon>Eukaryota</taxon>
        <taxon>Metazoa</taxon>
        <taxon>Chordata</taxon>
        <taxon>Craniata</taxon>
        <taxon>Vertebrata</taxon>
        <taxon>Euteleostomi</taxon>
        <taxon>Archelosauria</taxon>
        <taxon>Archosauria</taxon>
        <taxon>Dinosauria</taxon>
        <taxon>Saurischia</taxon>
        <taxon>Theropoda</taxon>
        <taxon>Coelurosauria</taxon>
        <taxon>Aves</taxon>
        <taxon>Palaeognathae</taxon>
        <taxon>Struthioniformes</taxon>
        <taxon>Struthionidae</taxon>
        <taxon>Struthio</taxon>
    </lineage>
</organism>
<feature type="chain" id="PRO_0000117481" description="NADH-ubiquinone oxidoreductase chain 1">
    <location>
        <begin position="1"/>
        <end position="324"/>
    </location>
</feature>
<feature type="transmembrane region" description="Helical" evidence="2">
    <location>
        <begin position="9"/>
        <end position="29"/>
    </location>
</feature>
<feature type="transmembrane region" description="Helical" evidence="2">
    <location>
        <begin position="75"/>
        <end position="95"/>
    </location>
</feature>
<feature type="transmembrane region" description="Helical" evidence="2">
    <location>
        <begin position="106"/>
        <end position="126"/>
    </location>
</feature>
<feature type="transmembrane region" description="Helical" evidence="2">
    <location>
        <begin position="142"/>
        <end position="162"/>
    </location>
</feature>
<feature type="transmembrane region" description="Helical" evidence="2">
    <location>
        <begin position="177"/>
        <end position="197"/>
    </location>
</feature>
<feature type="transmembrane region" description="Helical" evidence="2">
    <location>
        <begin position="228"/>
        <end position="248"/>
    </location>
</feature>
<feature type="transmembrane region" description="Helical" evidence="2">
    <location>
        <begin position="259"/>
        <end position="279"/>
    </location>
</feature>
<feature type="transmembrane region" description="Helical" evidence="2">
    <location>
        <begin position="300"/>
        <end position="320"/>
    </location>
</feature>
<feature type="sequence conflict" description="In Ref. 1; CAA72744." evidence="3" ref="1">
    <original>A</original>
    <variation>G</variation>
    <location>
        <position position="141"/>
    </location>
</feature>
<dbReference type="EC" id="7.1.1.2"/>
<dbReference type="EMBL" id="Y12025">
    <property type="protein sequence ID" value="CAA72744.1"/>
    <property type="molecule type" value="Genomic_DNA"/>
</dbReference>
<dbReference type="EMBL" id="AF069429">
    <property type="protein sequence ID" value="AAD09383.1"/>
    <property type="molecule type" value="Genomic_DNA"/>
</dbReference>
<dbReference type="EMBL" id="AF338715">
    <property type="protein sequence ID" value="AAK53351.1"/>
    <property type="molecule type" value="Genomic_DNA"/>
</dbReference>
<dbReference type="PIR" id="A90612">
    <property type="entry name" value="A90612"/>
</dbReference>
<dbReference type="PIR" id="T11519">
    <property type="entry name" value="T11519"/>
</dbReference>
<dbReference type="RefSeq" id="NP_115441.1">
    <property type="nucleotide sequence ID" value="NC_002785.1"/>
</dbReference>
<dbReference type="SMR" id="O21397"/>
<dbReference type="GeneID" id="803281"/>
<dbReference type="CTD" id="4535"/>
<dbReference type="GO" id="GO:0005743">
    <property type="term" value="C:mitochondrial inner membrane"/>
    <property type="evidence" value="ECO:0007669"/>
    <property type="project" value="UniProtKB-SubCell"/>
</dbReference>
<dbReference type="GO" id="GO:0008137">
    <property type="term" value="F:NADH dehydrogenase (ubiquinone) activity"/>
    <property type="evidence" value="ECO:0007669"/>
    <property type="project" value="UniProtKB-EC"/>
</dbReference>
<dbReference type="GO" id="GO:0009060">
    <property type="term" value="P:aerobic respiration"/>
    <property type="evidence" value="ECO:0007669"/>
    <property type="project" value="TreeGrafter"/>
</dbReference>
<dbReference type="HAMAP" id="MF_01350">
    <property type="entry name" value="NDH1_NuoH"/>
    <property type="match status" value="1"/>
</dbReference>
<dbReference type="InterPro" id="IPR001694">
    <property type="entry name" value="NADH_UbQ_OxRdtase_su1/FPO"/>
</dbReference>
<dbReference type="InterPro" id="IPR018086">
    <property type="entry name" value="NADH_UbQ_OxRdtase_su1_CS"/>
</dbReference>
<dbReference type="PANTHER" id="PTHR11432">
    <property type="entry name" value="NADH DEHYDROGENASE SUBUNIT 1"/>
    <property type="match status" value="1"/>
</dbReference>
<dbReference type="PANTHER" id="PTHR11432:SF3">
    <property type="entry name" value="NADH-UBIQUINONE OXIDOREDUCTASE CHAIN 1"/>
    <property type="match status" value="1"/>
</dbReference>
<dbReference type="Pfam" id="PF00146">
    <property type="entry name" value="NADHdh"/>
    <property type="match status" value="1"/>
</dbReference>
<dbReference type="PROSITE" id="PS00667">
    <property type="entry name" value="COMPLEX1_ND1_1"/>
    <property type="match status" value="1"/>
</dbReference>
<dbReference type="PROSITE" id="PS00668">
    <property type="entry name" value="COMPLEX1_ND1_2"/>
    <property type="match status" value="1"/>
</dbReference>
<gene>
    <name type="primary">MT-ND1</name>
    <name type="synonym">MTND1</name>
    <name type="synonym">NADH1</name>
    <name type="synonym">ND1</name>
</gene>
<geneLocation type="mitochondrion"/>
<name>NU1M_STRCA</name>